<proteinExistence type="inferred from homology"/>
<dbReference type="EMBL" id="CY026291">
    <property type="protein sequence ID" value="ABV82584.1"/>
    <property type="molecule type" value="Viral_cRNA"/>
</dbReference>
<dbReference type="SMR" id="A8C8W3"/>
<dbReference type="GlyCosmos" id="A8C8W3">
    <property type="glycosylation" value="6 sites, No reported glycans"/>
</dbReference>
<dbReference type="Proteomes" id="UP000116872">
    <property type="component" value="Genome"/>
</dbReference>
<dbReference type="GO" id="GO:0020002">
    <property type="term" value="C:host cell plasma membrane"/>
    <property type="evidence" value="ECO:0007669"/>
    <property type="project" value="UniProtKB-SubCell"/>
</dbReference>
<dbReference type="GO" id="GO:0016020">
    <property type="term" value="C:membrane"/>
    <property type="evidence" value="ECO:0007669"/>
    <property type="project" value="UniProtKB-UniRule"/>
</dbReference>
<dbReference type="GO" id="GO:0019031">
    <property type="term" value="C:viral envelope"/>
    <property type="evidence" value="ECO:0007669"/>
    <property type="project" value="UniProtKB-UniRule"/>
</dbReference>
<dbReference type="GO" id="GO:0055036">
    <property type="term" value="C:virion membrane"/>
    <property type="evidence" value="ECO:0007669"/>
    <property type="project" value="UniProtKB-SubCell"/>
</dbReference>
<dbReference type="GO" id="GO:0046789">
    <property type="term" value="F:host cell surface receptor binding"/>
    <property type="evidence" value="ECO:0007669"/>
    <property type="project" value="UniProtKB-UniRule"/>
</dbReference>
<dbReference type="GO" id="GO:0075512">
    <property type="term" value="P:clathrin-dependent endocytosis of virus by host cell"/>
    <property type="evidence" value="ECO:0007669"/>
    <property type="project" value="UniProtKB-UniRule"/>
</dbReference>
<dbReference type="GO" id="GO:0039654">
    <property type="term" value="P:fusion of virus membrane with host endosome membrane"/>
    <property type="evidence" value="ECO:0007669"/>
    <property type="project" value="UniProtKB-UniRule"/>
</dbReference>
<dbReference type="GO" id="GO:0019064">
    <property type="term" value="P:fusion of virus membrane with host plasma membrane"/>
    <property type="evidence" value="ECO:0007669"/>
    <property type="project" value="InterPro"/>
</dbReference>
<dbReference type="GO" id="GO:0046761">
    <property type="term" value="P:viral budding from plasma membrane"/>
    <property type="evidence" value="ECO:0007669"/>
    <property type="project" value="UniProtKB-UniRule"/>
</dbReference>
<dbReference type="GO" id="GO:0019062">
    <property type="term" value="P:virion attachment to host cell"/>
    <property type="evidence" value="ECO:0007669"/>
    <property type="project" value="UniProtKB-KW"/>
</dbReference>
<dbReference type="FunFam" id="3.90.20.10:FF:000002">
    <property type="entry name" value="Hemagglutinin"/>
    <property type="match status" value="1"/>
</dbReference>
<dbReference type="Gene3D" id="3.90.20.10">
    <property type="match status" value="1"/>
</dbReference>
<dbReference type="Gene3D" id="3.90.209.20">
    <property type="match status" value="1"/>
</dbReference>
<dbReference type="Gene3D" id="2.10.77.10">
    <property type="entry name" value="Hemagglutinin Chain A, Domain 2"/>
    <property type="match status" value="1"/>
</dbReference>
<dbReference type="HAMAP" id="MF_04072">
    <property type="entry name" value="INFV_HEMA"/>
    <property type="match status" value="1"/>
</dbReference>
<dbReference type="InterPro" id="IPR008980">
    <property type="entry name" value="Capsid_hemagglutn"/>
</dbReference>
<dbReference type="InterPro" id="IPR013828">
    <property type="entry name" value="Hemagglutn_HA1_a/b_dom_sf"/>
</dbReference>
<dbReference type="InterPro" id="IPR000149">
    <property type="entry name" value="Hemagglutn_influenz_A"/>
</dbReference>
<dbReference type="InterPro" id="IPR001364">
    <property type="entry name" value="Hemagglutn_influenz_A/B"/>
</dbReference>
<dbReference type="Pfam" id="PF00509">
    <property type="entry name" value="Hemagglutinin"/>
    <property type="match status" value="1"/>
</dbReference>
<dbReference type="PRINTS" id="PR00330">
    <property type="entry name" value="HEMAGGLUTN1"/>
</dbReference>
<dbReference type="PRINTS" id="PR00329">
    <property type="entry name" value="HEMAGGLUTN12"/>
</dbReference>
<dbReference type="SUPFAM" id="SSF58064">
    <property type="entry name" value="Influenza hemagglutinin (stalk)"/>
    <property type="match status" value="1"/>
</dbReference>
<dbReference type="SUPFAM" id="SSF49818">
    <property type="entry name" value="Viral protein domain"/>
    <property type="match status" value="1"/>
</dbReference>
<feature type="signal peptide" evidence="2">
    <location>
        <begin position="1"/>
        <end position="17"/>
    </location>
</feature>
<feature type="chain" id="PRO_0000440410" description="Hemagglutinin" evidence="2">
    <location>
        <begin position="18"/>
        <end position="566"/>
    </location>
</feature>
<feature type="chain" id="PRO_0000372887" description="Hemagglutinin HA1 chain" evidence="2">
    <location>
        <begin position="18"/>
        <end position="343"/>
    </location>
</feature>
<feature type="chain" id="PRO_0000372888" description="Hemagglutinin HA2 chain" evidence="2">
    <location>
        <begin position="345"/>
        <end position="566"/>
    </location>
</feature>
<feature type="topological domain" description="Extracellular" evidence="2">
    <location>
        <begin position="18"/>
        <end position="529"/>
    </location>
</feature>
<feature type="transmembrane region" description="Helical" evidence="2">
    <location>
        <begin position="530"/>
        <end position="550"/>
    </location>
</feature>
<feature type="topological domain" description="Cytoplasmic" evidence="2">
    <location>
        <begin position="551"/>
        <end position="566"/>
    </location>
</feature>
<feature type="site" description="Cleavage; by host" evidence="2">
    <location>
        <begin position="344"/>
        <end position="345"/>
    </location>
</feature>
<feature type="lipid moiety-binding region" description="S-palmitoyl cysteine; by host" evidence="2">
    <location>
        <position position="555"/>
    </location>
</feature>
<feature type="lipid moiety-binding region" description="S-palmitoyl cysteine; by host" evidence="2">
    <location>
        <position position="562"/>
    </location>
</feature>
<feature type="lipid moiety-binding region" description="S-palmitoyl cysteine; by host" evidence="2">
    <location>
        <position position="565"/>
    </location>
</feature>
<feature type="glycosylation site" description="N-linked (GlcNAc...) asparagine; by host" evidence="2">
    <location>
        <position position="27"/>
    </location>
</feature>
<feature type="glycosylation site" description="N-linked (GlcNAc...) asparagine; by host" evidence="2">
    <location>
        <position position="28"/>
    </location>
</feature>
<feature type="glycosylation site" description="N-linked (GlcNAc...) asparagine; by host" evidence="2">
    <location>
        <position position="40"/>
    </location>
</feature>
<feature type="glycosylation site" description="N-linked (GlcNAc...) asparagine; by host" evidence="2">
    <location>
        <position position="104"/>
    </location>
</feature>
<feature type="glycosylation site" description="N-linked (GlcNAc...) asparagine; by host" evidence="2">
    <location>
        <position position="304"/>
    </location>
</feature>
<feature type="glycosylation site" description="N-linked (GlcNAc...) asparagine; by host" evidence="2">
    <location>
        <position position="498"/>
    </location>
</feature>
<feature type="disulfide bond" description="Interchain (between HA1 and HA2 chains)" evidence="2">
    <location>
        <begin position="21"/>
        <end position="481"/>
    </location>
</feature>
<feature type="disulfide bond" evidence="2">
    <location>
        <begin position="59"/>
        <end position="292"/>
    </location>
</feature>
<feature type="disulfide bond" evidence="2">
    <location>
        <begin position="72"/>
        <end position="84"/>
    </location>
</feature>
<feature type="disulfide bond" evidence="2">
    <location>
        <begin position="107"/>
        <end position="153"/>
    </location>
</feature>
<feature type="disulfide bond" evidence="2">
    <location>
        <begin position="296"/>
        <end position="320"/>
    </location>
</feature>
<feature type="disulfide bond" evidence="2">
    <location>
        <begin position="488"/>
        <end position="492"/>
    </location>
</feature>
<organism>
    <name type="scientific">Influenza A virus (strain A/Swine/Wisconsin/1/1967 H1N1)</name>
    <dbReference type="NCBI Taxonomy" id="382855"/>
    <lineage>
        <taxon>Viruses</taxon>
        <taxon>Riboviria</taxon>
        <taxon>Orthornavirae</taxon>
        <taxon>Negarnaviricota</taxon>
        <taxon>Polyploviricotina</taxon>
        <taxon>Insthoviricetes</taxon>
        <taxon>Articulavirales</taxon>
        <taxon>Orthomyxoviridae</taxon>
        <taxon>Alphainfluenzavirus</taxon>
        <taxon>Alphainfluenzavirus influenzae</taxon>
        <taxon>Influenza A virus</taxon>
    </lineage>
</organism>
<organismHost>
    <name type="scientific">Aves</name>
    <dbReference type="NCBI Taxonomy" id="8782"/>
</organismHost>
<organismHost>
    <name type="scientific">Homo sapiens</name>
    <name type="common">Human</name>
    <dbReference type="NCBI Taxonomy" id="9606"/>
</organismHost>
<organismHost>
    <name type="scientific">Sus scrofa</name>
    <name type="common">Pig</name>
    <dbReference type="NCBI Taxonomy" id="9823"/>
</organismHost>
<reference key="1">
    <citation type="submission" date="2007-10" db="EMBL/GenBank/DDBJ databases">
        <title>The NIAID influenza genome sequencing project.</title>
        <authorList>
            <person name="Ghedin E."/>
            <person name="Spiro D."/>
            <person name="Miller N."/>
            <person name="Zaborsky J."/>
            <person name="Feldblyum T."/>
            <person name="Subbu V."/>
            <person name="Shumway M."/>
            <person name="Sparenborg J."/>
            <person name="Groveman L."/>
            <person name="Halpin R."/>
            <person name="Sitz J."/>
            <person name="Koo H."/>
            <person name="Salzberg S.L."/>
            <person name="Webster R.G."/>
            <person name="Hoffmann E."/>
            <person name="Krauss S."/>
            <person name="Naeve C."/>
            <person name="Bao Y."/>
            <person name="Bolotov P."/>
            <person name="Dernovoy D."/>
            <person name="Kiryutin B."/>
            <person name="Lipman D.J."/>
            <person name="Tatusova T."/>
        </authorList>
    </citation>
    <scope>NUCLEOTIDE SEQUENCE [GENOMIC RNA]</scope>
</reference>
<reference key="2">
    <citation type="submission" date="2007-10" db="EMBL/GenBank/DDBJ databases">
        <authorList>
            <consortium name="The NIAID Influenza Genome Sequencing Consortium"/>
        </authorList>
    </citation>
    <scope>NUCLEOTIDE SEQUENCE [GENOMIC RNA]</scope>
</reference>
<keyword id="KW-1167">Clathrin- and caveolin-independent endocytosis of virus by host</keyword>
<keyword id="KW-1165">Clathrin-mediated endocytosis of virus by host</keyword>
<keyword id="KW-1015">Disulfide bond</keyword>
<keyword id="KW-1170">Fusion of virus membrane with host endosomal membrane</keyword>
<keyword id="KW-1168">Fusion of virus membrane with host membrane</keyword>
<keyword id="KW-0325">Glycoprotein</keyword>
<keyword id="KW-0348">Hemagglutinin</keyword>
<keyword id="KW-1032">Host cell membrane</keyword>
<keyword id="KW-1043">Host membrane</keyword>
<keyword id="KW-0945">Host-virus interaction</keyword>
<keyword id="KW-0449">Lipoprotein</keyword>
<keyword id="KW-0472">Membrane</keyword>
<keyword id="KW-0564">Palmitate</keyword>
<keyword id="KW-0732">Signal</keyword>
<keyword id="KW-0812">Transmembrane</keyword>
<keyword id="KW-1133">Transmembrane helix</keyword>
<keyword id="KW-1161">Viral attachment to host cell</keyword>
<keyword id="KW-0261">Viral envelope protein</keyword>
<keyword id="KW-1162">Viral penetration into host cytoplasm</keyword>
<keyword id="KW-0946">Virion</keyword>
<keyword id="KW-1164">Virus endocytosis by host</keyword>
<keyword id="KW-1160">Virus entry into host cell</keyword>
<protein>
    <recommendedName>
        <fullName evidence="2">Hemagglutinin</fullName>
    </recommendedName>
    <component>
        <recommendedName>
            <fullName evidence="2">Hemagglutinin HA1 chain</fullName>
        </recommendedName>
    </component>
    <component>
        <recommendedName>
            <fullName evidence="2">Hemagglutinin HA2 chain</fullName>
        </recommendedName>
    </component>
</protein>
<name>HEMA_I67A2</name>
<gene>
    <name evidence="2" type="primary">HA</name>
</gene>
<sequence length="566" mass="63064">MKAILLVLLCTFAATNADTLCIGYHANNSTDTVDTVLEKNVTVTHSVNLLEDRHNGKLCKLGGIAPLHLGKCNIAGWILGNPECELLFTVSSWSYIVETSNSDNGTCYPGDFINYEELREQLSSVSSFERFEIFPKTSSWPNHETNKGVTASCPYAGANSFYRNLIWLVKKGSSYPKLSESYVNNKGKEVLVLWGIHHPPTSTDQQSLYQNADAYVFVGSSKYNRKFKPEIAARPKVRGQAGRMNYYWTLIEPGDTITFEATGNLVVPRYAFAMNRGSGSGIIISDAPVHDCNTKCQTPKGAINTSLPFQNIHPVTIGECPKYVKSTKLRMATGLRNIPSIQSRGLFGAIAGFIEGGWTGMIDGWYGYHHQNGQGSGYAADQKSTQNAIDGITNKVNSVIEKMNMQFTAVGKEFNNLEKRIENLNKKVDDGFLDVWTYNAELLVLLENERTLDFHDSNVKNLYEKVRSQLRNNAKEIGNGCFEFYHKCDDTCMESVKNGTYDYPKYSEESKLNREEIDGVKLESTRVYQILAIYSTVASSLVLLVSLGAISFWMCSNGSLQCRICI</sequence>
<evidence type="ECO:0000250" key="1">
    <source>
        <dbReference type="UniProtKB" id="Q289M7"/>
    </source>
</evidence>
<evidence type="ECO:0000255" key="2">
    <source>
        <dbReference type="HAMAP-Rule" id="MF_04072"/>
    </source>
</evidence>
<evidence type="ECO:0000305" key="3"/>
<comment type="function">
    <text evidence="2">Binds to sialic acid-containing receptors on the cell surface, bringing about the attachment of the virus particle to the cell. This attachment induces virion internalization either through clathrin-dependent endocytosis or through clathrin- and caveolin-independent pathway. Plays a major role in the determination of host range restriction and virulence. Class I viral fusion protein. Responsible for penetration of the virus into the cell cytoplasm by mediating the fusion of the membrane of the endocytosed virus particle with the endosomal membrane. Low pH in endosomes induces an irreversible conformational change in HA2, releasing the fusion hydrophobic peptide. Several trimers are required to form a competent fusion pore.</text>
</comment>
<comment type="subunit">
    <text evidence="1">Homotrimer of disulfide-linked HA1-HA2. Interacts with human CACNA1C.</text>
</comment>
<comment type="subcellular location">
    <subcellularLocation>
        <location evidence="2">Virion membrane</location>
        <topology evidence="2">Single-pass type I membrane protein</topology>
    </subcellularLocation>
    <subcellularLocation>
        <location evidence="2">Host apical cell membrane</location>
        <topology evidence="2">Single-pass type I membrane protein</topology>
    </subcellularLocation>
    <text evidence="2">Targeted to the apical plasma membrane in epithelial polarized cells through a signal present in the transmembrane domain. Associated with glycosphingolipid- and cholesterol-enriched detergent-resistant lipid rafts.</text>
</comment>
<comment type="PTM">
    <text evidence="2">Palmitoylated.</text>
</comment>
<comment type="PTM">
    <text evidence="2">In natural infection, inactive HA is matured into HA1 and HA2 outside the cell by one or more trypsin-like, arginine-specific endoprotease secreted by the bronchial epithelial cells. One identified protease that may be involved in this process is secreted in lungs by club cells.</text>
</comment>
<comment type="miscellaneous">
    <text>Major glycoprotein, comprises over 80% of the envelope proteins present in virus particle.</text>
</comment>
<comment type="miscellaneous">
    <text>The extent of infection into host organism is determined by HA. Influenza viruses bud from the apical surface of polarized epithelial cells (e.g. bronchial epithelial cells) into lumen of lungs and are therefore usually pneumotropic. The reason is that HA is cleaved by tryptase clara which is restricted to lungs. However, HAs of H5 and H7 pantropic avian viruses subtypes can be cleaved by furin and subtilisin-type enzymes, allowing the virus to grow in other organs than lungs.</text>
</comment>
<comment type="miscellaneous">
    <text evidence="3">The influenza A genome consist of 8 RNA segments. Genetic variation of hemagglutinin and/or neuraminidase genes results in the emergence of new influenza strains. The mechanism of variation can be the result of point mutations or the result of genetic reassortment between segments of two different strains.</text>
</comment>
<comment type="similarity">
    <text evidence="2">Belongs to the influenza viruses hemagglutinin family.</text>
</comment>
<accession>A8C8W3</accession>